<reference key="1">
    <citation type="journal article" date="1998" name="Genes Cells">
        <title>Large scale isolation of osteoclast-specific genes by an improved method involving the preparation of a subtracted cDNA library.</title>
        <authorList>
            <person name="Kobori M."/>
            <person name="Ikeda Y."/>
            <person name="Nara H."/>
            <person name="Kato M."/>
            <person name="Kumegawa M."/>
            <person name="Nojima H."/>
            <person name="Kawashima H."/>
        </authorList>
    </citation>
    <scope>NUCLEOTIDE SEQUENCE [MRNA]</scope>
    <source>
        <strain>Japanese white</strain>
        <tissue>Bone</tissue>
    </source>
</reference>
<proteinExistence type="evidence at transcript level"/>
<dbReference type="EMBL" id="AB009342">
    <property type="protein sequence ID" value="BAA75921.1"/>
    <property type="molecule type" value="mRNA"/>
</dbReference>
<dbReference type="RefSeq" id="NP_001076175.1">
    <property type="nucleotide sequence ID" value="NM_001082706.1"/>
</dbReference>
<dbReference type="SMR" id="O97862"/>
<dbReference type="FunCoup" id="O97862">
    <property type="interactions" value="37"/>
</dbReference>
<dbReference type="STRING" id="9986.ENSOCUP00000030610"/>
<dbReference type="MEROPS" id="I25.004"/>
<dbReference type="PaxDb" id="9986-ENSOCUP00000006974"/>
<dbReference type="GeneID" id="100009450"/>
<dbReference type="KEGG" id="ocu:100009450"/>
<dbReference type="CTD" id="1471"/>
<dbReference type="eggNOG" id="ENOG502SC50">
    <property type="taxonomic scope" value="Eukaryota"/>
</dbReference>
<dbReference type="InParanoid" id="O97862"/>
<dbReference type="OrthoDB" id="1908104at2759"/>
<dbReference type="Proteomes" id="UP000001811">
    <property type="component" value="Unplaced"/>
</dbReference>
<dbReference type="GO" id="GO:0005737">
    <property type="term" value="C:cytoplasm"/>
    <property type="evidence" value="ECO:0007669"/>
    <property type="project" value="TreeGrafter"/>
</dbReference>
<dbReference type="GO" id="GO:0005615">
    <property type="term" value="C:extracellular space"/>
    <property type="evidence" value="ECO:0007669"/>
    <property type="project" value="TreeGrafter"/>
</dbReference>
<dbReference type="GO" id="GO:0031982">
    <property type="term" value="C:vesicle"/>
    <property type="evidence" value="ECO:0007669"/>
    <property type="project" value="TreeGrafter"/>
</dbReference>
<dbReference type="GO" id="GO:0004869">
    <property type="term" value="F:cysteine-type endopeptidase inhibitor activity"/>
    <property type="evidence" value="ECO:0007669"/>
    <property type="project" value="UniProtKB-KW"/>
</dbReference>
<dbReference type="CDD" id="cd00042">
    <property type="entry name" value="CY"/>
    <property type="match status" value="1"/>
</dbReference>
<dbReference type="FunFam" id="3.10.450.10:FF:000004">
    <property type="entry name" value="Cystatin C"/>
    <property type="match status" value="1"/>
</dbReference>
<dbReference type="Gene3D" id="3.10.450.10">
    <property type="match status" value="1"/>
</dbReference>
<dbReference type="InterPro" id="IPR000010">
    <property type="entry name" value="Cystatin_dom"/>
</dbReference>
<dbReference type="InterPro" id="IPR046350">
    <property type="entry name" value="Cystatin_sf"/>
</dbReference>
<dbReference type="PANTHER" id="PTHR46186">
    <property type="entry name" value="CYSTATIN"/>
    <property type="match status" value="1"/>
</dbReference>
<dbReference type="PANTHER" id="PTHR46186:SF2">
    <property type="entry name" value="CYSTATIN"/>
    <property type="match status" value="1"/>
</dbReference>
<dbReference type="Pfam" id="PF00031">
    <property type="entry name" value="Cystatin"/>
    <property type="match status" value="1"/>
</dbReference>
<dbReference type="SMART" id="SM00043">
    <property type="entry name" value="CY"/>
    <property type="match status" value="1"/>
</dbReference>
<dbReference type="SUPFAM" id="SSF54403">
    <property type="entry name" value="Cystatin/monellin"/>
    <property type="match status" value="1"/>
</dbReference>
<gene>
    <name type="primary">CST3</name>
</gene>
<evidence type="ECO:0000250" key="1"/>
<evidence type="ECO:0000255" key="2"/>
<evidence type="ECO:0000305" key="3"/>
<organism>
    <name type="scientific">Oryctolagus cuniculus</name>
    <name type="common">Rabbit</name>
    <dbReference type="NCBI Taxonomy" id="9986"/>
    <lineage>
        <taxon>Eukaryota</taxon>
        <taxon>Metazoa</taxon>
        <taxon>Chordata</taxon>
        <taxon>Craniata</taxon>
        <taxon>Vertebrata</taxon>
        <taxon>Euteleostomi</taxon>
        <taxon>Mammalia</taxon>
        <taxon>Eutheria</taxon>
        <taxon>Euarchontoglires</taxon>
        <taxon>Glires</taxon>
        <taxon>Lagomorpha</taxon>
        <taxon>Leporidae</taxon>
        <taxon>Oryctolagus</taxon>
    </lineage>
</organism>
<accession>O97862</accession>
<keyword id="KW-1015">Disulfide bond</keyword>
<keyword id="KW-0646">Protease inhibitor</keyword>
<keyword id="KW-1185">Reference proteome</keyword>
<keyword id="KW-0964">Secreted</keyword>
<keyword id="KW-0732">Signal</keyword>
<keyword id="KW-0789">Thiol protease inhibitor</keyword>
<comment type="function">
    <text>This is a thiol proteinase inhibitor.</text>
</comment>
<comment type="subcellular location">
    <subcellularLocation>
        <location evidence="1">Secreted</location>
    </subcellularLocation>
</comment>
<comment type="similarity">
    <text evidence="3">Belongs to the cystatin family.</text>
</comment>
<protein>
    <recommendedName>
        <fullName>Cystatin-C</fullName>
    </recommendedName>
    <alternativeName>
        <fullName>Cystatin-3</fullName>
    </alternativeName>
</protein>
<feature type="signal peptide" evidence="2">
    <location>
        <begin position="1"/>
        <end position="28"/>
    </location>
</feature>
<feature type="chain" id="PRO_0000006643" description="Cystatin-C">
    <location>
        <begin position="29"/>
        <end position="148"/>
    </location>
</feature>
<feature type="short sequence motif" description="Secondary area of contact">
    <location>
        <begin position="83"/>
        <end position="87"/>
    </location>
</feature>
<feature type="site" description="Reactive site">
    <location>
        <position position="39"/>
    </location>
</feature>
<feature type="disulfide bond" evidence="1">
    <location>
        <begin position="101"/>
        <end position="111"/>
    </location>
</feature>
<feature type="disulfide bond" evidence="1">
    <location>
        <begin position="125"/>
        <end position="145"/>
    </location>
</feature>
<sequence length="148" mass="16346">MARSLGVPLLLLAALVVALALAVSPAAGARTRQSPRLLGGLEDVDAQEKDVQRALGFAESEYNKGSNDRYHSRALQVVRARRQIVSGVKYYLDVLIGRTTCTKTQTNLANCPFHDQPDLQRKMLCSFEIYSVPWLNKISLLKSDCQNA</sequence>
<name>CYTC_RABIT</name>